<organism>
    <name type="scientific">Arabidopsis thaliana</name>
    <name type="common">Mouse-ear cress</name>
    <dbReference type="NCBI Taxonomy" id="3702"/>
    <lineage>
        <taxon>Eukaryota</taxon>
        <taxon>Viridiplantae</taxon>
        <taxon>Streptophyta</taxon>
        <taxon>Embryophyta</taxon>
        <taxon>Tracheophyta</taxon>
        <taxon>Spermatophyta</taxon>
        <taxon>Magnoliopsida</taxon>
        <taxon>eudicotyledons</taxon>
        <taxon>Gunneridae</taxon>
        <taxon>Pentapetalae</taxon>
        <taxon>rosids</taxon>
        <taxon>malvids</taxon>
        <taxon>Brassicales</taxon>
        <taxon>Brassicaceae</taxon>
        <taxon>Camelineae</taxon>
        <taxon>Arabidopsis</taxon>
    </lineage>
</organism>
<proteinExistence type="evidence at transcript level"/>
<dbReference type="EC" id="1.8.4.12"/>
<dbReference type="EMBL" id="AF118223">
    <property type="protein sequence ID" value="AAD03445.1"/>
    <property type="status" value="ALT_SEQ"/>
    <property type="molecule type" value="Genomic_DNA"/>
</dbReference>
<dbReference type="EMBL" id="AL161501">
    <property type="protein sequence ID" value="CAB80849.1"/>
    <property type="status" value="ALT_SEQ"/>
    <property type="molecule type" value="Genomic_DNA"/>
</dbReference>
<dbReference type="EMBL" id="CP002687">
    <property type="protein sequence ID" value="AEE82431.1"/>
    <property type="molecule type" value="Genomic_DNA"/>
</dbReference>
<dbReference type="EMBL" id="AK118878">
    <property type="protein sequence ID" value="BAC43463.1"/>
    <property type="molecule type" value="mRNA"/>
</dbReference>
<dbReference type="EMBL" id="BT005459">
    <property type="protein sequence ID" value="AAO63879.1"/>
    <property type="molecule type" value="mRNA"/>
</dbReference>
<dbReference type="PIR" id="H85060">
    <property type="entry name" value="H85060"/>
</dbReference>
<dbReference type="RefSeq" id="NP_192393.2">
    <property type="nucleotide sequence ID" value="NM_116722.4"/>
</dbReference>
<dbReference type="SMR" id="Q8GWF4"/>
<dbReference type="FunCoup" id="Q8GWF4">
    <property type="interactions" value="107"/>
</dbReference>
<dbReference type="STRING" id="3702.Q8GWF4"/>
<dbReference type="PaxDb" id="3702-AT4G04840.1"/>
<dbReference type="ProteomicsDB" id="250963"/>
<dbReference type="EnsemblPlants" id="AT4G04840.1">
    <property type="protein sequence ID" value="AT4G04840.1"/>
    <property type="gene ID" value="AT4G04840"/>
</dbReference>
<dbReference type="GeneID" id="825821"/>
<dbReference type="Gramene" id="AT4G04840.1">
    <property type="protein sequence ID" value="AT4G04840.1"/>
    <property type="gene ID" value="AT4G04840"/>
</dbReference>
<dbReference type="KEGG" id="ath:AT4G04840"/>
<dbReference type="Araport" id="AT4G04840"/>
<dbReference type="TAIR" id="AT4G04840">
    <property type="gene designation" value="MSRB6"/>
</dbReference>
<dbReference type="eggNOG" id="KOG0856">
    <property type="taxonomic scope" value="Eukaryota"/>
</dbReference>
<dbReference type="HOGENOM" id="CLU_031040_8_5_1"/>
<dbReference type="InParanoid" id="Q8GWF4"/>
<dbReference type="OMA" id="FEEGIYC"/>
<dbReference type="PhylomeDB" id="Q8GWF4"/>
<dbReference type="PRO" id="PR:Q8GWF4"/>
<dbReference type="Proteomes" id="UP000006548">
    <property type="component" value="Chromosome 4"/>
</dbReference>
<dbReference type="ExpressionAtlas" id="Q8GWF4">
    <property type="expression patterns" value="baseline and differential"/>
</dbReference>
<dbReference type="GO" id="GO:0005829">
    <property type="term" value="C:cytosol"/>
    <property type="evidence" value="ECO:0007669"/>
    <property type="project" value="UniProtKB-SubCell"/>
</dbReference>
<dbReference type="GO" id="GO:0046872">
    <property type="term" value="F:metal ion binding"/>
    <property type="evidence" value="ECO:0007669"/>
    <property type="project" value="UniProtKB-KW"/>
</dbReference>
<dbReference type="GO" id="GO:0033743">
    <property type="term" value="F:peptide-methionine (R)-S-oxide reductase activity"/>
    <property type="evidence" value="ECO:0007669"/>
    <property type="project" value="UniProtKB-EC"/>
</dbReference>
<dbReference type="GO" id="GO:0030091">
    <property type="term" value="P:protein repair"/>
    <property type="evidence" value="ECO:0007669"/>
    <property type="project" value="InterPro"/>
</dbReference>
<dbReference type="GO" id="GO:0006979">
    <property type="term" value="P:response to oxidative stress"/>
    <property type="evidence" value="ECO:0007669"/>
    <property type="project" value="InterPro"/>
</dbReference>
<dbReference type="Gene3D" id="2.170.150.20">
    <property type="entry name" value="Peptide methionine sulfoxide reductase"/>
    <property type="match status" value="1"/>
</dbReference>
<dbReference type="InterPro" id="IPR028427">
    <property type="entry name" value="Met_Sox_Rdtase_MsrB"/>
</dbReference>
<dbReference type="InterPro" id="IPR002579">
    <property type="entry name" value="Met_Sox_Rdtase_MsrB_dom"/>
</dbReference>
<dbReference type="InterPro" id="IPR011057">
    <property type="entry name" value="Mss4-like_sf"/>
</dbReference>
<dbReference type="NCBIfam" id="TIGR00357">
    <property type="entry name" value="peptide-methionine (R)-S-oxide reductase MsrB"/>
    <property type="match status" value="1"/>
</dbReference>
<dbReference type="PANTHER" id="PTHR46081">
    <property type="entry name" value="PEPTIDE METHIONINE SULFOXIDE REDUCTASE 2"/>
    <property type="match status" value="1"/>
</dbReference>
<dbReference type="PANTHER" id="PTHR46081:SF8">
    <property type="entry name" value="PEPTIDE METHIONINE SULFOXIDE REDUCTASE 2"/>
    <property type="match status" value="1"/>
</dbReference>
<dbReference type="Pfam" id="PF01641">
    <property type="entry name" value="SelR"/>
    <property type="match status" value="1"/>
</dbReference>
<dbReference type="SUPFAM" id="SSF51316">
    <property type="entry name" value="Mss4-like"/>
    <property type="match status" value="1"/>
</dbReference>
<dbReference type="PROSITE" id="PS51790">
    <property type="entry name" value="MSRB"/>
    <property type="match status" value="1"/>
</dbReference>
<comment type="function">
    <text evidence="1">Catalyzes the reduction of methionine sulfoxide (MetSO) to methionine in proteins. Plays a protective role against oxidative stress by restoring activity to proteins that have been inactivated by methionine oxidation. MSRB family specifically reduces the MetSO R-enantiomer (By similarity).</text>
</comment>
<comment type="catalytic activity">
    <reaction>
        <text>L-methionyl-[protein] + [thioredoxin]-disulfide + H2O = L-methionyl-(R)-S-oxide-[protein] + [thioredoxin]-dithiol</text>
        <dbReference type="Rhea" id="RHEA:24164"/>
        <dbReference type="Rhea" id="RHEA-COMP:10698"/>
        <dbReference type="Rhea" id="RHEA-COMP:10700"/>
        <dbReference type="Rhea" id="RHEA-COMP:12313"/>
        <dbReference type="Rhea" id="RHEA-COMP:12314"/>
        <dbReference type="ChEBI" id="CHEBI:15377"/>
        <dbReference type="ChEBI" id="CHEBI:16044"/>
        <dbReference type="ChEBI" id="CHEBI:29950"/>
        <dbReference type="ChEBI" id="CHEBI:45764"/>
        <dbReference type="ChEBI" id="CHEBI:50058"/>
        <dbReference type="EC" id="1.8.4.12"/>
    </reaction>
</comment>
<comment type="cofactor">
    <cofactor evidence="1">
        <name>Zn(2+)</name>
        <dbReference type="ChEBI" id="CHEBI:29105"/>
    </cofactor>
    <text evidence="1">Binds 1 zinc ion per subunit.</text>
</comment>
<comment type="subcellular location">
    <subcellularLocation>
        <location evidence="3">Cytoplasm</location>
        <location evidence="3">Cytosol</location>
    </subcellularLocation>
</comment>
<comment type="similarity">
    <text evidence="3">Belongs to the MsrB Met sulfoxide reductase family.</text>
</comment>
<comment type="sequence caution" evidence="3">
    <conflict type="erroneous gene model prediction">
        <sequence resource="EMBL-CDS" id="AAD03445"/>
    </conflict>
</comment>
<comment type="sequence caution" evidence="3">
    <conflict type="erroneous gene model prediction">
        <sequence resource="EMBL-CDS" id="CAB80849"/>
    </conflict>
</comment>
<evidence type="ECO:0000250" key="1"/>
<evidence type="ECO:0000255" key="2">
    <source>
        <dbReference type="PROSITE-ProRule" id="PRU01126"/>
    </source>
</evidence>
<evidence type="ECO:0000305" key="3"/>
<feature type="chain" id="PRO_0000395524" description="Peptide methionine sulfoxide reductase B6">
    <location>
        <begin position="1"/>
        <end position="153"/>
    </location>
</feature>
<feature type="domain" description="MsrB" evidence="2">
    <location>
        <begin position="28"/>
        <end position="149"/>
    </location>
</feature>
<feature type="active site" description="Nucleophile" evidence="2">
    <location>
        <position position="138"/>
    </location>
</feature>
<feature type="binding site" evidence="2">
    <location>
        <position position="67"/>
    </location>
    <ligand>
        <name>Zn(2+)</name>
        <dbReference type="ChEBI" id="CHEBI:29105"/>
    </ligand>
</feature>
<feature type="binding site" evidence="2">
    <location>
        <position position="70"/>
    </location>
    <ligand>
        <name>Zn(2+)</name>
        <dbReference type="ChEBI" id="CHEBI:29105"/>
    </ligand>
</feature>
<feature type="binding site" evidence="2">
    <location>
        <position position="113"/>
    </location>
    <ligand>
        <name>Zn(2+)</name>
        <dbReference type="ChEBI" id="CHEBI:29105"/>
    </ligand>
</feature>
<feature type="binding site" evidence="2">
    <location>
        <position position="116"/>
    </location>
    <ligand>
        <name>Zn(2+)</name>
        <dbReference type="ChEBI" id="CHEBI:29105"/>
    </ligand>
</feature>
<feature type="disulfide bond" description="Redox-active" evidence="1">
    <location>
        <begin position="85"/>
        <end position="138"/>
    </location>
</feature>
<keyword id="KW-0963">Cytoplasm</keyword>
<keyword id="KW-1015">Disulfide bond</keyword>
<keyword id="KW-0249">Electron transport</keyword>
<keyword id="KW-0479">Metal-binding</keyword>
<keyword id="KW-0560">Oxidoreductase</keyword>
<keyword id="KW-0676">Redox-active center</keyword>
<keyword id="KW-1185">Reference proteome</keyword>
<keyword id="KW-0813">Transport</keyword>
<keyword id="KW-0862">Zinc</keyword>
<accession>Q8GWF4</accession>
<accession>Q9M0Z4</accession>
<accession>Q9ZS90</accession>
<sequence length="153" mass="17098">MNTSPKMEMEMKMETKAAPEAGMIKKSNEEWRTVLSPEQFKILREKSIEKRGSGEYVKLFEEGIYCCVGCGNPVYKSTTKFDSGCGWPAFFDAIPGAINRTEERAGLRYEITCTKCDGHLGHVLKNEGFPTPTDERHCVNSVALKFSSAITSQ</sequence>
<gene>
    <name type="primary">MSRB6</name>
    <name type="ordered locus">At4g04840</name>
    <name type="ORF">T4B21.4</name>
</gene>
<reference key="1">
    <citation type="journal article" date="1999" name="Nature">
        <title>Sequence and analysis of chromosome 4 of the plant Arabidopsis thaliana.</title>
        <authorList>
            <person name="Mayer K.F.X."/>
            <person name="Schueller C."/>
            <person name="Wambutt R."/>
            <person name="Murphy G."/>
            <person name="Volckaert G."/>
            <person name="Pohl T."/>
            <person name="Duesterhoeft A."/>
            <person name="Stiekema W."/>
            <person name="Entian K.-D."/>
            <person name="Terryn N."/>
            <person name="Harris B."/>
            <person name="Ansorge W."/>
            <person name="Brandt P."/>
            <person name="Grivell L.A."/>
            <person name="Rieger M."/>
            <person name="Weichselgartner M."/>
            <person name="de Simone V."/>
            <person name="Obermaier B."/>
            <person name="Mache R."/>
            <person name="Mueller M."/>
            <person name="Kreis M."/>
            <person name="Delseny M."/>
            <person name="Puigdomenech P."/>
            <person name="Watson M."/>
            <person name="Schmidtheini T."/>
            <person name="Reichert B."/>
            <person name="Portetelle D."/>
            <person name="Perez-Alonso M."/>
            <person name="Boutry M."/>
            <person name="Bancroft I."/>
            <person name="Vos P."/>
            <person name="Hoheisel J."/>
            <person name="Zimmermann W."/>
            <person name="Wedler H."/>
            <person name="Ridley P."/>
            <person name="Langham S.-A."/>
            <person name="McCullagh B."/>
            <person name="Bilham L."/>
            <person name="Robben J."/>
            <person name="van der Schueren J."/>
            <person name="Grymonprez B."/>
            <person name="Chuang Y.-J."/>
            <person name="Vandenbussche F."/>
            <person name="Braeken M."/>
            <person name="Weltjens I."/>
            <person name="Voet M."/>
            <person name="Bastiaens I."/>
            <person name="Aert R."/>
            <person name="Defoor E."/>
            <person name="Weitzenegger T."/>
            <person name="Bothe G."/>
            <person name="Ramsperger U."/>
            <person name="Hilbert H."/>
            <person name="Braun M."/>
            <person name="Holzer E."/>
            <person name="Brandt A."/>
            <person name="Peters S."/>
            <person name="van Staveren M."/>
            <person name="Dirkse W."/>
            <person name="Mooijman P."/>
            <person name="Klein Lankhorst R."/>
            <person name="Rose M."/>
            <person name="Hauf J."/>
            <person name="Koetter P."/>
            <person name="Berneiser S."/>
            <person name="Hempel S."/>
            <person name="Feldpausch M."/>
            <person name="Lamberth S."/>
            <person name="Van den Daele H."/>
            <person name="De Keyser A."/>
            <person name="Buysshaert C."/>
            <person name="Gielen J."/>
            <person name="Villarroel R."/>
            <person name="De Clercq R."/>
            <person name="van Montagu M."/>
            <person name="Rogers J."/>
            <person name="Cronin A."/>
            <person name="Quail M.A."/>
            <person name="Bray-Allen S."/>
            <person name="Clark L."/>
            <person name="Doggett J."/>
            <person name="Hall S."/>
            <person name="Kay M."/>
            <person name="Lennard N."/>
            <person name="McLay K."/>
            <person name="Mayes R."/>
            <person name="Pettett A."/>
            <person name="Rajandream M.A."/>
            <person name="Lyne M."/>
            <person name="Benes V."/>
            <person name="Rechmann S."/>
            <person name="Borkova D."/>
            <person name="Bloecker H."/>
            <person name="Scharfe M."/>
            <person name="Grimm M."/>
            <person name="Loehnert T.-H."/>
            <person name="Dose S."/>
            <person name="de Haan M."/>
            <person name="Maarse A.C."/>
            <person name="Schaefer M."/>
            <person name="Mueller-Auer S."/>
            <person name="Gabel C."/>
            <person name="Fuchs M."/>
            <person name="Fartmann B."/>
            <person name="Granderath K."/>
            <person name="Dauner D."/>
            <person name="Herzl A."/>
            <person name="Neumann S."/>
            <person name="Argiriou A."/>
            <person name="Vitale D."/>
            <person name="Liguori R."/>
            <person name="Piravandi E."/>
            <person name="Massenet O."/>
            <person name="Quigley F."/>
            <person name="Clabauld G."/>
            <person name="Muendlein A."/>
            <person name="Felber R."/>
            <person name="Schnabl S."/>
            <person name="Hiller R."/>
            <person name="Schmidt W."/>
            <person name="Lecharny A."/>
            <person name="Aubourg S."/>
            <person name="Chefdor F."/>
            <person name="Cooke R."/>
            <person name="Berger C."/>
            <person name="Monfort A."/>
            <person name="Casacuberta E."/>
            <person name="Gibbons T."/>
            <person name="Weber N."/>
            <person name="Vandenbol M."/>
            <person name="Bargues M."/>
            <person name="Terol J."/>
            <person name="Torres A."/>
            <person name="Perez-Perez A."/>
            <person name="Purnelle B."/>
            <person name="Bent E."/>
            <person name="Johnson S."/>
            <person name="Tacon D."/>
            <person name="Jesse T."/>
            <person name="Heijnen L."/>
            <person name="Schwarz S."/>
            <person name="Scholler P."/>
            <person name="Heber S."/>
            <person name="Francs P."/>
            <person name="Bielke C."/>
            <person name="Frishman D."/>
            <person name="Haase D."/>
            <person name="Lemcke K."/>
            <person name="Mewes H.-W."/>
            <person name="Stocker S."/>
            <person name="Zaccaria P."/>
            <person name="Bevan M."/>
            <person name="Wilson R.K."/>
            <person name="de la Bastide M."/>
            <person name="Habermann K."/>
            <person name="Parnell L."/>
            <person name="Dedhia N."/>
            <person name="Gnoj L."/>
            <person name="Schutz K."/>
            <person name="Huang E."/>
            <person name="Spiegel L."/>
            <person name="Sekhon M."/>
            <person name="Murray J."/>
            <person name="Sheet P."/>
            <person name="Cordes M."/>
            <person name="Abu-Threideh J."/>
            <person name="Stoneking T."/>
            <person name="Kalicki J."/>
            <person name="Graves T."/>
            <person name="Harmon G."/>
            <person name="Edwards J."/>
            <person name="Latreille P."/>
            <person name="Courtney L."/>
            <person name="Cloud J."/>
            <person name="Abbott A."/>
            <person name="Scott K."/>
            <person name="Johnson D."/>
            <person name="Minx P."/>
            <person name="Bentley D."/>
            <person name="Fulton B."/>
            <person name="Miller N."/>
            <person name="Greco T."/>
            <person name="Kemp K."/>
            <person name="Kramer J."/>
            <person name="Fulton L."/>
            <person name="Mardis E."/>
            <person name="Dante M."/>
            <person name="Pepin K."/>
            <person name="Hillier L.W."/>
            <person name="Nelson J."/>
            <person name="Spieth J."/>
            <person name="Ryan E."/>
            <person name="Andrews S."/>
            <person name="Geisel C."/>
            <person name="Layman D."/>
            <person name="Du H."/>
            <person name="Ali J."/>
            <person name="Berghoff A."/>
            <person name="Jones K."/>
            <person name="Drone K."/>
            <person name="Cotton M."/>
            <person name="Joshu C."/>
            <person name="Antonoiu B."/>
            <person name="Zidanic M."/>
            <person name="Strong C."/>
            <person name="Sun H."/>
            <person name="Lamar B."/>
            <person name="Yordan C."/>
            <person name="Ma P."/>
            <person name="Zhong J."/>
            <person name="Preston R."/>
            <person name="Vil D."/>
            <person name="Shekher M."/>
            <person name="Matero A."/>
            <person name="Shah R."/>
            <person name="Swaby I.K."/>
            <person name="O'Shaughnessy A."/>
            <person name="Rodriguez M."/>
            <person name="Hoffman J."/>
            <person name="Till S."/>
            <person name="Granat S."/>
            <person name="Shohdy N."/>
            <person name="Hasegawa A."/>
            <person name="Hameed A."/>
            <person name="Lodhi M."/>
            <person name="Johnson A."/>
            <person name="Chen E."/>
            <person name="Marra M.A."/>
            <person name="Martienssen R."/>
            <person name="McCombie W.R."/>
        </authorList>
    </citation>
    <scope>NUCLEOTIDE SEQUENCE [LARGE SCALE GENOMIC DNA]</scope>
    <source>
        <strain>cv. Columbia</strain>
    </source>
</reference>
<reference key="2">
    <citation type="journal article" date="2017" name="Plant J.">
        <title>Araport11: a complete reannotation of the Arabidopsis thaliana reference genome.</title>
        <authorList>
            <person name="Cheng C.Y."/>
            <person name="Krishnakumar V."/>
            <person name="Chan A.P."/>
            <person name="Thibaud-Nissen F."/>
            <person name="Schobel S."/>
            <person name="Town C.D."/>
        </authorList>
    </citation>
    <scope>GENOME REANNOTATION</scope>
    <source>
        <strain>cv. Columbia</strain>
    </source>
</reference>
<reference key="3">
    <citation type="journal article" date="2002" name="Science">
        <title>Functional annotation of a full-length Arabidopsis cDNA collection.</title>
        <authorList>
            <person name="Seki M."/>
            <person name="Narusaka M."/>
            <person name="Kamiya A."/>
            <person name="Ishida J."/>
            <person name="Satou M."/>
            <person name="Sakurai T."/>
            <person name="Nakajima M."/>
            <person name="Enju A."/>
            <person name="Akiyama K."/>
            <person name="Oono Y."/>
            <person name="Muramatsu M."/>
            <person name="Hayashizaki Y."/>
            <person name="Kawai J."/>
            <person name="Carninci P."/>
            <person name="Itoh M."/>
            <person name="Ishii Y."/>
            <person name="Arakawa T."/>
            <person name="Shibata K."/>
            <person name="Shinagawa A."/>
            <person name="Shinozaki K."/>
        </authorList>
    </citation>
    <scope>NUCLEOTIDE SEQUENCE [LARGE SCALE MRNA]</scope>
    <source>
        <strain>cv. Columbia</strain>
    </source>
</reference>
<reference key="4">
    <citation type="journal article" date="2003" name="Science">
        <title>Empirical analysis of transcriptional activity in the Arabidopsis genome.</title>
        <authorList>
            <person name="Yamada K."/>
            <person name="Lim J."/>
            <person name="Dale J.M."/>
            <person name="Chen H."/>
            <person name="Shinn P."/>
            <person name="Palm C.J."/>
            <person name="Southwick A.M."/>
            <person name="Wu H.C."/>
            <person name="Kim C.J."/>
            <person name="Nguyen M."/>
            <person name="Pham P.K."/>
            <person name="Cheuk R.F."/>
            <person name="Karlin-Newmann G."/>
            <person name="Liu S.X."/>
            <person name="Lam B."/>
            <person name="Sakano H."/>
            <person name="Wu T."/>
            <person name="Yu G."/>
            <person name="Miranda M."/>
            <person name="Quach H.L."/>
            <person name="Tripp M."/>
            <person name="Chang C.H."/>
            <person name="Lee J.M."/>
            <person name="Toriumi M.J."/>
            <person name="Chan M.M."/>
            <person name="Tang C.C."/>
            <person name="Onodera C.S."/>
            <person name="Deng J.M."/>
            <person name="Akiyama K."/>
            <person name="Ansari Y."/>
            <person name="Arakawa T."/>
            <person name="Banh J."/>
            <person name="Banno F."/>
            <person name="Bowser L."/>
            <person name="Brooks S.Y."/>
            <person name="Carninci P."/>
            <person name="Chao Q."/>
            <person name="Choy N."/>
            <person name="Enju A."/>
            <person name="Goldsmith A.D."/>
            <person name="Gurjal M."/>
            <person name="Hansen N.F."/>
            <person name="Hayashizaki Y."/>
            <person name="Johnson-Hopson C."/>
            <person name="Hsuan V.W."/>
            <person name="Iida K."/>
            <person name="Karnes M."/>
            <person name="Khan S."/>
            <person name="Koesema E."/>
            <person name="Ishida J."/>
            <person name="Jiang P.X."/>
            <person name="Jones T."/>
            <person name="Kawai J."/>
            <person name="Kamiya A."/>
            <person name="Meyers C."/>
            <person name="Nakajima M."/>
            <person name="Narusaka M."/>
            <person name="Seki M."/>
            <person name="Sakurai T."/>
            <person name="Satou M."/>
            <person name="Tamse R."/>
            <person name="Vaysberg M."/>
            <person name="Wallender E.K."/>
            <person name="Wong C."/>
            <person name="Yamamura Y."/>
            <person name="Yuan S."/>
            <person name="Shinozaki K."/>
            <person name="Davis R.W."/>
            <person name="Theologis A."/>
            <person name="Ecker J.R."/>
        </authorList>
    </citation>
    <scope>NUCLEOTIDE SEQUENCE [LARGE SCALE MRNA]</scope>
    <source>
        <strain>cv. Columbia</strain>
    </source>
</reference>
<reference key="5">
    <citation type="journal article" date="2006" name="Photosyn. Res.">
        <title>Plant methionine sulfoxide reductase A and B multigenic families.</title>
        <authorList>
            <person name="Rouhier N."/>
            <person name="Vieira Dos Santos C."/>
            <person name="Tarrago L."/>
            <person name="Rey P."/>
        </authorList>
    </citation>
    <scope>GENE FAMILY</scope>
    <scope>NOMENCLATURE</scope>
</reference>
<protein>
    <recommendedName>
        <fullName>Peptide methionine sulfoxide reductase B6</fullName>
        <shortName>AtMSRB6</shortName>
        <ecNumber>1.8.4.12</ecNumber>
    </recommendedName>
    <alternativeName>
        <fullName>Peptide-methionine (R)-S-oxide reductase</fullName>
    </alternativeName>
</protein>
<name>MSRB6_ARATH</name>